<comment type="function">
    <text evidence="1">Actin-binding protein involved in motile and morphological processes. Inhibits actin polymerization, likely by sequestering G-actin. By capping the barbed ends of filaments, it also regulates motility. Seems to play an important role in clathrin-mediated endocytosis and distribution of endocytic organelles. May play a role in regulating the mature length of the middle and short rows of stereocilia (By similarity).</text>
</comment>
<comment type="subunit">
    <text evidence="1">Interacts with G-actin; ADP-actin form and capping protein (CP). May also be able to interact with TWF1 and phosphoinositides, PI(4,5)P2. When bound to PI(4,5)P2, it is down-regulated. Interacts with MYO7A (By similarity).</text>
</comment>
<comment type="interaction">
    <interactant intactId="EBI-722204">
        <id>Q6IBS0</id>
    </interactant>
    <interactant intactId="EBI-750109">
        <id>Q9NYB0</id>
        <label>TERF2IP</label>
    </interactant>
    <organismsDiffer>false</organismsDiffer>
    <experiments>2</experiments>
</comment>
<comment type="subcellular location">
    <subcellularLocation>
        <location evidence="4">Cytoplasm</location>
        <location evidence="4">Cytoskeleton</location>
    </subcellularLocation>
    <subcellularLocation>
        <location evidence="4">Cytoplasm</location>
        <location evidence="4">Perinuclear region</location>
    </subcellularLocation>
    <subcellularLocation>
        <location evidence="1">Cell projection</location>
        <location evidence="1">Stereocilium</location>
    </subcellularLocation>
    <text>Perinuclear and G-actin-rich cortical actin structure sublocalization.</text>
</comment>
<comment type="tissue specificity">
    <text evidence="4">Ubiquitously expressed (at protein level).</text>
</comment>
<comment type="PTM">
    <text evidence="4">In vitro, phosphorylated by PRKCZ, CK2 and SRC.</text>
</comment>
<comment type="similarity">
    <text evidence="7">Belongs to the actin-binding proteins ADF family. Twinfilin subfamily.</text>
</comment>
<comment type="online information" name="Protein Spotlight">
    <link uri="https://www.proteinspotlight.org/back_issues/073"/>
    <text>Molecular embrace - Issue 73 of August 2006</text>
</comment>
<reference key="1">
    <citation type="journal article" date="1999" name="Eur. J. Biochem.">
        <title>Cloning, expression and characterization of an A6 related protein.</title>
        <authorList>
            <person name="Rohwer A."/>
            <person name="Kittstein W."/>
            <person name="Marks F."/>
            <person name="Gschwendt M."/>
        </authorList>
    </citation>
    <scope>NUCLEOTIDE SEQUENCE [MRNA]</scope>
    <scope>TISSUE SPECIFICITY</scope>
    <scope>SUBCELLULAR LOCATION</scope>
    <scope>PHOSPHORYLATION</scope>
    <source>
        <tissue>Keratinocyte</tissue>
    </source>
</reference>
<reference key="2">
    <citation type="journal article" date="2001" name="Genome Res.">
        <title>Towards a catalog of human genes and proteins: sequencing and analysis of 500 novel complete protein coding human cDNAs.</title>
        <authorList>
            <person name="Wiemann S."/>
            <person name="Weil B."/>
            <person name="Wellenreuther R."/>
            <person name="Gassenhuber J."/>
            <person name="Glassl S."/>
            <person name="Ansorge W."/>
            <person name="Boecher M."/>
            <person name="Bloecker H."/>
            <person name="Bauersachs S."/>
            <person name="Blum H."/>
            <person name="Lauber J."/>
            <person name="Duesterhoeft A."/>
            <person name="Beyer A."/>
            <person name="Koehrer K."/>
            <person name="Strack N."/>
            <person name="Mewes H.-W."/>
            <person name="Ottenwaelder B."/>
            <person name="Obermaier B."/>
            <person name="Tampe J."/>
            <person name="Heubner D."/>
            <person name="Wambutt R."/>
            <person name="Korn B."/>
            <person name="Klein M."/>
            <person name="Poustka A."/>
        </authorList>
    </citation>
    <scope>NUCLEOTIDE SEQUENCE [LARGE SCALE MRNA]</scope>
    <source>
        <tissue>Testis</tissue>
    </source>
</reference>
<reference key="3">
    <citation type="submission" date="1998-11" db="EMBL/GenBank/DDBJ databases">
        <authorList>
            <person name="Hui R.T."/>
            <person name="Liu Y.Q."/>
            <person name="Liu B."/>
            <person name="Zhao B."/>
            <person name="Meng X.M."/>
            <person name="Sheng H."/>
            <person name="Xu Y.Y."/>
            <person name="Wang X.Y."/>
            <person name="Ye J."/>
            <person name="Song L."/>
            <person name="Gao Y."/>
            <person name="Wei Y.J."/>
            <person name="Zhang C.L."/>
            <person name="Zhang J."/>
            <person name="Chai M.Q."/>
            <person name="Chen J.Z."/>
            <person name="Sun Y.H."/>
            <person name="Zhou X.L."/>
            <person name="Jiang Y.X."/>
            <person name="Zhao X.W."/>
            <person name="Liu S."/>
            <person name="Cao H.Q."/>
            <person name="Zhao Y."/>
            <person name="Liu D.Q."/>
            <person name="Ding J.F."/>
            <person name="Liu L.S."/>
            <person name="Gao R.L."/>
            <person name="Wu Q.Y."/>
            <person name="Qiang B.Q."/>
            <person name="Yuan J.G."/>
            <person name="Liew C.C."/>
            <person name="Zhao M.S."/>
        </authorList>
    </citation>
    <scope>NUCLEOTIDE SEQUENCE [LARGE SCALE MRNA]</scope>
    <source>
        <tissue>Aorta</tissue>
    </source>
</reference>
<reference key="4">
    <citation type="submission" date="2004-06" db="EMBL/GenBank/DDBJ databases">
        <title>Cloning of human full open reading frames in Gateway(TM) system entry vector (pDONR201).</title>
        <authorList>
            <person name="Ebert L."/>
            <person name="Schick M."/>
            <person name="Neubert P."/>
            <person name="Schatten R."/>
            <person name="Henze S."/>
            <person name="Korn B."/>
        </authorList>
    </citation>
    <scope>NUCLEOTIDE SEQUENCE [LARGE SCALE MRNA]</scope>
</reference>
<reference key="5">
    <citation type="journal article" date="2004" name="Genome Res.">
        <title>The status, quality, and expansion of the NIH full-length cDNA project: the Mammalian Gene Collection (MGC).</title>
        <authorList>
            <consortium name="The MGC Project Team"/>
        </authorList>
    </citation>
    <scope>NUCLEOTIDE SEQUENCE [LARGE SCALE MRNA]</scope>
    <source>
        <tissue>Kidney</tissue>
        <tissue>Lung</tissue>
        <tissue>Placenta</tissue>
    </source>
</reference>
<reference key="6">
    <citation type="submission" date="2008-03" db="UniProtKB">
        <authorList>
            <person name="Bienvenut W.V."/>
            <person name="Vousden K.H."/>
            <person name="Lukashchuk N."/>
        </authorList>
    </citation>
    <scope>PROTEIN SEQUENCE OF 2-19 AND 279-293</scope>
    <scope>CLEAVAGE OF INITIATOR METHIONINE</scope>
    <scope>ACETYLATION AT ALA-2</scope>
    <scope>IDENTIFICATION BY MASS SPECTROMETRY</scope>
    <source>
        <tissue>Lung carcinoma</tissue>
    </source>
</reference>
<reference key="7">
    <citation type="journal article" date="2005" name="Nat. Biotechnol.">
        <title>Immunoaffinity profiling of tyrosine phosphorylation in cancer cells.</title>
        <authorList>
            <person name="Rush J."/>
            <person name="Moritz A."/>
            <person name="Lee K.A."/>
            <person name="Guo A."/>
            <person name="Goss V.L."/>
            <person name="Spek E.J."/>
            <person name="Zhang H."/>
            <person name="Zha X.-M."/>
            <person name="Polakiewicz R.D."/>
            <person name="Comb M.J."/>
        </authorList>
    </citation>
    <scope>PHOSPHORYLATION [LARGE SCALE ANALYSIS] AT TYR-309</scope>
    <scope>IDENTIFICATION BY MASS SPECTROMETRY [LARGE SCALE ANALYSIS]</scope>
</reference>
<reference key="8">
    <citation type="journal article" date="2008" name="Proc. Natl. Acad. Sci. U.S.A.">
        <title>A quantitative atlas of mitotic phosphorylation.</title>
        <authorList>
            <person name="Dephoure N."/>
            <person name="Zhou C."/>
            <person name="Villen J."/>
            <person name="Beausoleil S.A."/>
            <person name="Bakalarski C.E."/>
            <person name="Elledge S.J."/>
            <person name="Gygi S.P."/>
        </authorList>
    </citation>
    <scope>IDENTIFICATION BY MASS SPECTROMETRY [LARGE SCALE ANALYSIS]</scope>
    <source>
        <tissue>Cervix carcinoma</tissue>
    </source>
</reference>
<reference key="9">
    <citation type="journal article" date="2009" name="Anal. Chem.">
        <title>Lys-N and trypsin cover complementary parts of the phosphoproteome in a refined SCX-based approach.</title>
        <authorList>
            <person name="Gauci S."/>
            <person name="Helbig A.O."/>
            <person name="Slijper M."/>
            <person name="Krijgsveld J."/>
            <person name="Heck A.J."/>
            <person name="Mohammed S."/>
        </authorList>
    </citation>
    <scope>ACETYLATION [LARGE SCALE ANALYSIS] AT ALA-2</scope>
    <scope>CLEAVAGE OF INITIATOR METHIONINE [LARGE SCALE ANALYSIS]</scope>
    <scope>IDENTIFICATION BY MASS SPECTROMETRY [LARGE SCALE ANALYSIS]</scope>
</reference>
<reference key="10">
    <citation type="journal article" date="2009" name="Sci. Signal.">
        <title>Quantitative phosphoproteomic analysis of T cell receptor signaling reveals system-wide modulation of protein-protein interactions.</title>
        <authorList>
            <person name="Mayya V."/>
            <person name="Lundgren D.H."/>
            <person name="Hwang S.-I."/>
            <person name="Rezaul K."/>
            <person name="Wu L."/>
            <person name="Eng J.K."/>
            <person name="Rodionov V."/>
            <person name="Han D.K."/>
        </authorList>
    </citation>
    <scope>PHOSPHORYLATION [LARGE SCALE ANALYSIS] AT TYR-309 AND SER-349</scope>
    <scope>IDENTIFICATION BY MASS SPECTROMETRY [LARGE SCALE ANALYSIS]</scope>
    <source>
        <tissue>Leukemic T-cell</tissue>
    </source>
</reference>
<reference key="11">
    <citation type="journal article" date="2009" name="Science">
        <title>Lysine acetylation targets protein complexes and co-regulates major cellular functions.</title>
        <authorList>
            <person name="Choudhary C."/>
            <person name="Kumar C."/>
            <person name="Gnad F."/>
            <person name="Nielsen M.L."/>
            <person name="Rehman M."/>
            <person name="Walther T.C."/>
            <person name="Olsen J.V."/>
            <person name="Mann M."/>
        </authorList>
    </citation>
    <scope>ACETYLATION [LARGE SCALE ANALYSIS] AT LYS-14</scope>
    <scope>IDENTIFICATION BY MASS SPECTROMETRY [LARGE SCALE ANALYSIS]</scope>
</reference>
<reference key="12">
    <citation type="journal article" date="2011" name="BMC Syst. Biol.">
        <title>Initial characterization of the human central proteome.</title>
        <authorList>
            <person name="Burkard T.R."/>
            <person name="Planyavsky M."/>
            <person name="Kaupe I."/>
            <person name="Breitwieser F.P."/>
            <person name="Buerckstuemmer T."/>
            <person name="Bennett K.L."/>
            <person name="Superti-Furga G."/>
            <person name="Colinge J."/>
        </authorList>
    </citation>
    <scope>IDENTIFICATION BY MASS SPECTROMETRY [LARGE SCALE ANALYSIS]</scope>
</reference>
<reference key="13">
    <citation type="journal article" date="2011" name="Sci. Signal.">
        <title>System-wide temporal characterization of the proteome and phosphoproteome of human embryonic stem cell differentiation.</title>
        <authorList>
            <person name="Rigbolt K.T."/>
            <person name="Prokhorova T.A."/>
            <person name="Akimov V."/>
            <person name="Henningsen J."/>
            <person name="Johansen P.T."/>
            <person name="Kratchmarova I."/>
            <person name="Kassem M."/>
            <person name="Mann M."/>
            <person name="Olsen J.V."/>
            <person name="Blagoev B."/>
        </authorList>
    </citation>
    <scope>PHOSPHORYLATION [LARGE SCALE ANALYSIS] AT SER-349</scope>
    <scope>IDENTIFICATION BY MASS SPECTROMETRY [LARGE SCALE ANALYSIS]</scope>
</reference>
<reference key="14">
    <citation type="submission" date="2007-08" db="PDB data bank">
        <title>Crystal structure of N-Terminal and C-Terminal actin depolymerizing factor homology (Adf-H) domain of human twinfilin-2.</title>
        <authorList>
            <consortium name="Structural genomics consortium (SGC)"/>
        </authorList>
    </citation>
    <scope>X-RAY CRYSTALLOGRAPHY (1.70 ANGSTROMS) OF 6-313</scope>
</reference>
<reference key="15">
    <citation type="journal article" date="2007" name="Nature">
        <title>Patterns of somatic mutation in human cancer genomes.</title>
        <authorList>
            <person name="Greenman C."/>
            <person name="Stephens P."/>
            <person name="Smith R."/>
            <person name="Dalgliesh G.L."/>
            <person name="Hunter C."/>
            <person name="Bignell G."/>
            <person name="Davies H."/>
            <person name="Teague J."/>
            <person name="Butler A."/>
            <person name="Stevens C."/>
            <person name="Edkins S."/>
            <person name="O'Meara S."/>
            <person name="Vastrik I."/>
            <person name="Schmidt E.E."/>
            <person name="Avis T."/>
            <person name="Barthorpe S."/>
            <person name="Bhamra G."/>
            <person name="Buck G."/>
            <person name="Choudhury B."/>
            <person name="Clements J."/>
            <person name="Cole J."/>
            <person name="Dicks E."/>
            <person name="Forbes S."/>
            <person name="Gray K."/>
            <person name="Halliday K."/>
            <person name="Harrison R."/>
            <person name="Hills K."/>
            <person name="Hinton J."/>
            <person name="Jenkinson A."/>
            <person name="Jones D."/>
            <person name="Menzies A."/>
            <person name="Mironenko T."/>
            <person name="Perry J."/>
            <person name="Raine K."/>
            <person name="Richardson D."/>
            <person name="Shepherd R."/>
            <person name="Small A."/>
            <person name="Tofts C."/>
            <person name="Varian J."/>
            <person name="Webb T."/>
            <person name="West S."/>
            <person name="Widaa S."/>
            <person name="Yates A."/>
            <person name="Cahill D.P."/>
            <person name="Louis D.N."/>
            <person name="Goldstraw P."/>
            <person name="Nicholson A.G."/>
            <person name="Brasseur F."/>
            <person name="Looijenga L."/>
            <person name="Weber B.L."/>
            <person name="Chiew Y.-E."/>
            <person name="DeFazio A."/>
            <person name="Greaves M.F."/>
            <person name="Green A.R."/>
            <person name="Campbell P."/>
            <person name="Birney E."/>
            <person name="Easton D.F."/>
            <person name="Chenevix-Trench G."/>
            <person name="Tan M.-H."/>
            <person name="Khoo S.K."/>
            <person name="Teh B.T."/>
            <person name="Yuen S.T."/>
            <person name="Leung S.Y."/>
            <person name="Wooster R."/>
            <person name="Futreal P.A."/>
            <person name="Stratton M.R."/>
        </authorList>
    </citation>
    <scope>VARIANTS [LARGE SCALE ANALYSIS] CYS-72; ARG-76 AND THR-103</scope>
</reference>
<name>TWF2_HUMAN</name>
<gene>
    <name type="primary">TWF2</name>
    <name type="synonym">PTK9L</name>
    <name type="ORF">MSTP011</name>
</gene>
<keyword id="KW-0002">3D-structure</keyword>
<keyword id="KW-0007">Acetylation</keyword>
<keyword id="KW-0009">Actin-binding</keyword>
<keyword id="KW-0966">Cell projection</keyword>
<keyword id="KW-0970">Cilium biogenesis/degradation</keyword>
<keyword id="KW-0963">Cytoplasm</keyword>
<keyword id="KW-0206">Cytoskeleton</keyword>
<keyword id="KW-0903">Direct protein sequencing</keyword>
<keyword id="KW-0597">Phosphoprotein</keyword>
<keyword id="KW-1267">Proteomics identification</keyword>
<keyword id="KW-1185">Reference proteome</keyword>
<keyword id="KW-0677">Repeat</keyword>
<feature type="initiator methionine" description="Removed" evidence="6 9">
    <location>
        <position position="1"/>
    </location>
</feature>
<feature type="chain" id="PRO_0000233136" description="Twinfilin-2">
    <location>
        <begin position="2"/>
        <end position="349"/>
    </location>
</feature>
<feature type="domain" description="ADF-H 1" evidence="2">
    <location>
        <begin position="4"/>
        <end position="139"/>
    </location>
</feature>
<feature type="domain" description="ADF-H 2" evidence="2">
    <location>
        <begin position="177"/>
        <end position="313"/>
    </location>
</feature>
<feature type="region of interest" description="Disordered" evidence="3">
    <location>
        <begin position="322"/>
        <end position="349"/>
    </location>
</feature>
<feature type="compositionally biased region" description="Basic residues" evidence="3">
    <location>
        <begin position="330"/>
        <end position="339"/>
    </location>
</feature>
<feature type="modified residue" description="N-acetylalanine" evidence="6 9">
    <location>
        <position position="2"/>
    </location>
</feature>
<feature type="modified residue" description="N6-acetyllysine" evidence="10">
    <location>
        <position position="14"/>
    </location>
</feature>
<feature type="modified residue" description="Phosphotyrosine" evidence="8 11">
    <location>
        <position position="309"/>
    </location>
</feature>
<feature type="modified residue" description="Phosphoserine" evidence="11 12">
    <location>
        <position position="349"/>
    </location>
</feature>
<feature type="sequence variant" id="VAR_042407" description="In dbSNP:rs35114109." evidence="5">
    <original>R</original>
    <variation>C</variation>
    <location>
        <position position="72"/>
    </location>
</feature>
<feature type="sequence variant" id="VAR_042408" description="In dbSNP:rs35711542." evidence="5">
    <original>Q</original>
    <variation>R</variation>
    <location>
        <position position="76"/>
    </location>
</feature>
<feature type="sequence variant" id="VAR_042409" description="In a lung neuroendocrine carcinoma sample; somatic mutation; dbSNP:rs867679383." evidence="5">
    <original>A</original>
    <variation>T</variation>
    <location>
        <position position="103"/>
    </location>
</feature>
<feature type="sequence conflict" description="In Ref. 4; CAG33013." evidence="7" ref="4">
    <original>K</original>
    <variation>R</variation>
    <location>
        <position position="110"/>
    </location>
</feature>
<feature type="helix" evidence="13">
    <location>
        <begin position="11"/>
        <end position="22"/>
    </location>
</feature>
<feature type="strand" evidence="13">
    <location>
        <begin position="26"/>
        <end position="33"/>
    </location>
</feature>
<feature type="strand" evidence="13">
    <location>
        <begin position="36"/>
        <end position="43"/>
    </location>
</feature>
<feature type="helix" evidence="13">
    <location>
        <begin position="49"/>
        <end position="57"/>
    </location>
</feature>
<feature type="helix" evidence="13">
    <location>
        <begin position="58"/>
        <end position="60"/>
    </location>
</feature>
<feature type="strand" evidence="13">
    <location>
        <begin position="67"/>
        <end position="77"/>
    </location>
</feature>
<feature type="strand" evidence="13">
    <location>
        <begin position="80"/>
        <end position="88"/>
    </location>
</feature>
<feature type="helix" evidence="13">
    <location>
        <begin position="95"/>
        <end position="112"/>
    </location>
</feature>
<feature type="helix" evidence="13">
    <location>
        <begin position="114"/>
        <end position="116"/>
    </location>
</feature>
<feature type="strand" evidence="13">
    <location>
        <begin position="117"/>
        <end position="125"/>
    </location>
</feature>
<feature type="helix" evidence="13">
    <location>
        <begin position="126"/>
        <end position="129"/>
    </location>
</feature>
<feature type="helix" evidence="13">
    <location>
        <begin position="131"/>
        <end position="136"/>
    </location>
</feature>
<feature type="helix" evidence="14">
    <location>
        <begin position="184"/>
        <end position="194"/>
    </location>
</feature>
<feature type="strand" evidence="14">
    <location>
        <begin position="199"/>
        <end position="206"/>
    </location>
</feature>
<feature type="turn" evidence="14">
    <location>
        <begin position="207"/>
        <end position="210"/>
    </location>
</feature>
<feature type="strand" evidence="14">
    <location>
        <begin position="211"/>
        <end position="216"/>
    </location>
</feature>
<feature type="helix" evidence="14">
    <location>
        <begin position="222"/>
        <end position="228"/>
    </location>
</feature>
<feature type="strand" evidence="14">
    <location>
        <begin position="231"/>
        <end position="233"/>
    </location>
</feature>
<feature type="strand" evidence="14">
    <location>
        <begin position="235"/>
        <end position="245"/>
    </location>
</feature>
<feature type="strand" evidence="14">
    <location>
        <begin position="248"/>
        <end position="258"/>
    </location>
</feature>
<feature type="helix" evidence="14">
    <location>
        <begin position="261"/>
        <end position="263"/>
    </location>
</feature>
<feature type="helix" evidence="14">
    <location>
        <begin position="266"/>
        <end position="285"/>
    </location>
</feature>
<feature type="strand" evidence="14">
    <location>
        <begin position="291"/>
        <end position="298"/>
    </location>
</feature>
<feature type="helix" evidence="14">
    <location>
        <begin position="300"/>
        <end position="302"/>
    </location>
</feature>
<feature type="helix" evidence="14">
    <location>
        <begin position="305"/>
        <end position="312"/>
    </location>
</feature>
<proteinExistence type="evidence at protein level"/>
<dbReference type="EMBL" id="Y17169">
    <property type="protein sequence ID" value="CAB38055.1"/>
    <property type="molecule type" value="mRNA"/>
</dbReference>
<dbReference type="EMBL" id="AL136773">
    <property type="protein sequence ID" value="CAB66707.1"/>
    <property type="molecule type" value="mRNA"/>
</dbReference>
<dbReference type="EMBL" id="AF109365">
    <property type="protein sequence ID" value="AAQ13513.1"/>
    <property type="molecule type" value="mRNA"/>
</dbReference>
<dbReference type="EMBL" id="CR456732">
    <property type="protein sequence ID" value="CAG33013.1"/>
    <property type="molecule type" value="mRNA"/>
</dbReference>
<dbReference type="EMBL" id="CR533520">
    <property type="protein sequence ID" value="CAG38551.1"/>
    <property type="molecule type" value="mRNA"/>
</dbReference>
<dbReference type="EMBL" id="BC000327">
    <property type="protein sequence ID" value="AAH00327.1"/>
    <property type="molecule type" value="mRNA"/>
</dbReference>
<dbReference type="EMBL" id="BC003161">
    <property type="protein sequence ID" value="AAH03161.1"/>
    <property type="molecule type" value="mRNA"/>
</dbReference>
<dbReference type="EMBL" id="BC016452">
    <property type="protein sequence ID" value="AAH16452.1"/>
    <property type="molecule type" value="mRNA"/>
</dbReference>
<dbReference type="CCDS" id="CCDS2849.1"/>
<dbReference type="PIR" id="T46362">
    <property type="entry name" value="T46362"/>
</dbReference>
<dbReference type="RefSeq" id="NP_009215.1">
    <property type="nucleotide sequence ID" value="NM_007284.4"/>
</dbReference>
<dbReference type="PDB" id="2VAC">
    <property type="method" value="X-ray"/>
    <property type="resolution" value="1.70 A"/>
    <property type="chains" value="A=6-137"/>
</dbReference>
<dbReference type="PDB" id="2W0I">
    <property type="method" value="X-ray"/>
    <property type="resolution" value="1.80 A"/>
    <property type="chains" value="A=181-313"/>
</dbReference>
<dbReference type="PDBsum" id="2VAC"/>
<dbReference type="PDBsum" id="2W0I"/>
<dbReference type="SMR" id="Q6IBS0"/>
<dbReference type="BioGRID" id="116472">
    <property type="interactions" value="99"/>
</dbReference>
<dbReference type="FunCoup" id="Q6IBS0">
    <property type="interactions" value="584"/>
</dbReference>
<dbReference type="IntAct" id="Q6IBS0">
    <property type="interactions" value="51"/>
</dbReference>
<dbReference type="MINT" id="Q6IBS0"/>
<dbReference type="STRING" id="9606.ENSP00000303908"/>
<dbReference type="GlyCosmos" id="Q6IBS0">
    <property type="glycosylation" value="2 sites, 1 glycan"/>
</dbReference>
<dbReference type="GlyGen" id="Q6IBS0">
    <property type="glycosylation" value="2 sites, 1 O-linked glycan (2 sites)"/>
</dbReference>
<dbReference type="iPTMnet" id="Q6IBS0"/>
<dbReference type="PhosphoSitePlus" id="Q6IBS0"/>
<dbReference type="SwissPalm" id="Q6IBS0"/>
<dbReference type="BioMuta" id="TWF2"/>
<dbReference type="DMDM" id="94730596"/>
<dbReference type="OGP" id="Q9Y3F5"/>
<dbReference type="jPOST" id="Q6IBS0"/>
<dbReference type="MassIVE" id="Q6IBS0"/>
<dbReference type="PaxDb" id="9606-ENSP00000303908"/>
<dbReference type="PeptideAtlas" id="Q6IBS0"/>
<dbReference type="ProteomicsDB" id="66370"/>
<dbReference type="Pumba" id="Q6IBS0"/>
<dbReference type="Antibodypedia" id="46152">
    <property type="antibodies" value="242 antibodies from 28 providers"/>
</dbReference>
<dbReference type="DNASU" id="11344"/>
<dbReference type="Ensembl" id="ENST00000305533.10">
    <property type="protein sequence ID" value="ENSP00000303908.4"/>
    <property type="gene ID" value="ENSG00000247596.10"/>
</dbReference>
<dbReference type="GeneID" id="11344"/>
<dbReference type="KEGG" id="hsa:11344"/>
<dbReference type="MANE-Select" id="ENST00000305533.10">
    <property type="protein sequence ID" value="ENSP00000303908.4"/>
    <property type="RefSeq nucleotide sequence ID" value="NM_007284.4"/>
    <property type="RefSeq protein sequence ID" value="NP_009215.1"/>
</dbReference>
<dbReference type="UCSC" id="uc003ddd.4">
    <property type="organism name" value="human"/>
</dbReference>
<dbReference type="AGR" id="HGNC:9621"/>
<dbReference type="CTD" id="11344"/>
<dbReference type="DisGeNET" id="11344"/>
<dbReference type="GeneCards" id="TWF2"/>
<dbReference type="HGNC" id="HGNC:9621">
    <property type="gene designation" value="TWF2"/>
</dbReference>
<dbReference type="HPA" id="ENSG00000247596">
    <property type="expression patterns" value="Tissue enhanced (skeletal)"/>
</dbReference>
<dbReference type="MIM" id="607433">
    <property type="type" value="gene"/>
</dbReference>
<dbReference type="neXtProt" id="NX_Q6IBS0"/>
<dbReference type="OpenTargets" id="ENSG00000247596"/>
<dbReference type="PharmGKB" id="PA162407429"/>
<dbReference type="VEuPathDB" id="HostDB:ENSG00000247596"/>
<dbReference type="eggNOG" id="KOG1747">
    <property type="taxonomic scope" value="Eukaryota"/>
</dbReference>
<dbReference type="GeneTree" id="ENSGT00530000063868"/>
<dbReference type="HOGENOM" id="CLU_031995_1_0_1"/>
<dbReference type="InParanoid" id="Q6IBS0"/>
<dbReference type="OMA" id="AMTHQTG"/>
<dbReference type="OrthoDB" id="10006997at2759"/>
<dbReference type="PAN-GO" id="Q6IBS0">
    <property type="GO annotations" value="10 GO annotations based on evolutionary models"/>
</dbReference>
<dbReference type="PhylomeDB" id="Q6IBS0"/>
<dbReference type="TreeFam" id="TF352598"/>
<dbReference type="PathwayCommons" id="Q6IBS0"/>
<dbReference type="Reactome" id="R-HSA-9662360">
    <property type="pathway name" value="Sensory processing of sound by inner hair cells of the cochlea"/>
</dbReference>
<dbReference type="Reactome" id="R-HSA-9662361">
    <property type="pathway name" value="Sensory processing of sound by outer hair cells of the cochlea"/>
</dbReference>
<dbReference type="SignaLink" id="Q6IBS0"/>
<dbReference type="BioGRID-ORCS" id="11344">
    <property type="hits" value="16 hits in 1157 CRISPR screens"/>
</dbReference>
<dbReference type="ChiTaRS" id="TWF2">
    <property type="organism name" value="human"/>
</dbReference>
<dbReference type="EvolutionaryTrace" id="Q6IBS0"/>
<dbReference type="GeneWiki" id="TWF2"/>
<dbReference type="GenomeRNAi" id="11344"/>
<dbReference type="Pharos" id="Q6IBS0">
    <property type="development level" value="Tbio"/>
</dbReference>
<dbReference type="PRO" id="PR:Q6IBS0"/>
<dbReference type="Proteomes" id="UP000005640">
    <property type="component" value="Chromosome 3"/>
</dbReference>
<dbReference type="RNAct" id="Q6IBS0">
    <property type="molecule type" value="protein"/>
</dbReference>
<dbReference type="Bgee" id="ENSG00000247596">
    <property type="expression patterns" value="Expressed in apex of heart and 194 other cell types or tissues"/>
</dbReference>
<dbReference type="ExpressionAtlas" id="Q6IBS0">
    <property type="expression patterns" value="baseline and differential"/>
</dbReference>
<dbReference type="GO" id="GO:0005884">
    <property type="term" value="C:actin filament"/>
    <property type="evidence" value="ECO:0000318"/>
    <property type="project" value="GO_Central"/>
</dbReference>
<dbReference type="GO" id="GO:0005737">
    <property type="term" value="C:cytoplasm"/>
    <property type="evidence" value="ECO:0000314"/>
    <property type="project" value="BHF-UCL"/>
</dbReference>
<dbReference type="GO" id="GO:0070062">
    <property type="term" value="C:extracellular exosome"/>
    <property type="evidence" value="ECO:0007005"/>
    <property type="project" value="UniProtKB"/>
</dbReference>
<dbReference type="GO" id="GO:0030175">
    <property type="term" value="C:filopodium"/>
    <property type="evidence" value="ECO:0000250"/>
    <property type="project" value="BHF-UCL"/>
</dbReference>
<dbReference type="GO" id="GO:0030426">
    <property type="term" value="C:growth cone"/>
    <property type="evidence" value="ECO:0000314"/>
    <property type="project" value="BHF-UCL"/>
</dbReference>
<dbReference type="GO" id="GO:0030027">
    <property type="term" value="C:lamellipodium"/>
    <property type="evidence" value="ECO:0000250"/>
    <property type="project" value="BHF-UCL"/>
</dbReference>
<dbReference type="GO" id="GO:0030016">
    <property type="term" value="C:myofibril"/>
    <property type="evidence" value="ECO:0000250"/>
    <property type="project" value="BHF-UCL"/>
</dbReference>
<dbReference type="GO" id="GO:0048471">
    <property type="term" value="C:perinuclear region of cytoplasm"/>
    <property type="evidence" value="ECO:0000250"/>
    <property type="project" value="BHF-UCL"/>
</dbReference>
<dbReference type="GO" id="GO:0032420">
    <property type="term" value="C:stereocilium"/>
    <property type="evidence" value="ECO:0000250"/>
    <property type="project" value="BHF-UCL"/>
</dbReference>
<dbReference type="GO" id="GO:0051015">
    <property type="term" value="F:actin filament binding"/>
    <property type="evidence" value="ECO:0000318"/>
    <property type="project" value="GO_Central"/>
</dbReference>
<dbReference type="GO" id="GO:0003785">
    <property type="term" value="F:actin monomer binding"/>
    <property type="evidence" value="ECO:0000250"/>
    <property type="project" value="BHF-UCL"/>
</dbReference>
<dbReference type="GO" id="GO:0005524">
    <property type="term" value="F:ATP binding"/>
    <property type="evidence" value="ECO:0000314"/>
    <property type="project" value="UniProtKB"/>
</dbReference>
<dbReference type="GO" id="GO:0045296">
    <property type="term" value="F:cadherin binding"/>
    <property type="evidence" value="ECO:0007005"/>
    <property type="project" value="BHF-UCL"/>
</dbReference>
<dbReference type="GO" id="GO:0005546">
    <property type="term" value="F:phosphatidylinositol-4,5-bisphosphate binding"/>
    <property type="evidence" value="ECO:0000250"/>
    <property type="project" value="BHF-UCL"/>
</dbReference>
<dbReference type="GO" id="GO:0005080">
    <property type="term" value="F:protein kinase C binding"/>
    <property type="evidence" value="ECO:0000353"/>
    <property type="project" value="BHF-UCL"/>
</dbReference>
<dbReference type="GO" id="GO:0003723">
    <property type="term" value="F:RNA binding"/>
    <property type="evidence" value="ECO:0007005"/>
    <property type="project" value="UniProtKB"/>
</dbReference>
<dbReference type="GO" id="GO:0030042">
    <property type="term" value="P:actin filament depolymerization"/>
    <property type="evidence" value="ECO:0000318"/>
    <property type="project" value="GO_Central"/>
</dbReference>
<dbReference type="GO" id="GO:0051016">
    <property type="term" value="P:barbed-end actin filament capping"/>
    <property type="evidence" value="ECO:0000250"/>
    <property type="project" value="BHF-UCL"/>
</dbReference>
<dbReference type="GO" id="GO:0030030">
    <property type="term" value="P:cell projection organization"/>
    <property type="evidence" value="ECO:0007669"/>
    <property type="project" value="UniProtKB-KW"/>
</dbReference>
<dbReference type="GO" id="GO:0071363">
    <property type="term" value="P:cellular response to growth factor stimulus"/>
    <property type="evidence" value="ECO:0000315"/>
    <property type="project" value="BHF-UCL"/>
</dbReference>
<dbReference type="GO" id="GO:0071300">
    <property type="term" value="P:cellular response to retinoic acid"/>
    <property type="evidence" value="ECO:0000315"/>
    <property type="project" value="BHF-UCL"/>
</dbReference>
<dbReference type="GO" id="GO:0030837">
    <property type="term" value="P:negative regulation of actin filament polymerization"/>
    <property type="evidence" value="ECO:0000250"/>
    <property type="project" value="BHF-UCL"/>
</dbReference>
<dbReference type="GO" id="GO:0045773">
    <property type="term" value="P:positive regulation of axon extension"/>
    <property type="evidence" value="ECO:0000315"/>
    <property type="project" value="BHF-UCL"/>
</dbReference>
<dbReference type="GO" id="GO:0010592">
    <property type="term" value="P:positive regulation of lamellipodium assembly"/>
    <property type="evidence" value="ECO:0000315"/>
    <property type="project" value="BHF-UCL"/>
</dbReference>
<dbReference type="GO" id="GO:0010976">
    <property type="term" value="P:positive regulation of neuron projection development"/>
    <property type="evidence" value="ECO:0000315"/>
    <property type="project" value="BHF-UCL"/>
</dbReference>
<dbReference type="GO" id="GO:0032956">
    <property type="term" value="P:regulation of actin cytoskeleton organization"/>
    <property type="evidence" value="ECO:0000315"/>
    <property type="project" value="BHF-UCL"/>
</dbReference>
<dbReference type="GO" id="GO:0010591">
    <property type="term" value="P:regulation of lamellipodium assembly"/>
    <property type="evidence" value="ECO:0000318"/>
    <property type="project" value="GO_Central"/>
</dbReference>
<dbReference type="GO" id="GO:0032532">
    <property type="term" value="P:regulation of microvillus length"/>
    <property type="evidence" value="ECO:0000305"/>
    <property type="project" value="BHF-UCL"/>
</dbReference>
<dbReference type="CDD" id="cd11284">
    <property type="entry name" value="ADF_Twf-C_like"/>
    <property type="match status" value="1"/>
</dbReference>
<dbReference type="CDD" id="cd11285">
    <property type="entry name" value="ADF_Twf-N_like"/>
    <property type="match status" value="1"/>
</dbReference>
<dbReference type="FunFam" id="3.40.20.10:FF:000007">
    <property type="entry name" value="Twinfilin-1 isoform 1"/>
    <property type="match status" value="1"/>
</dbReference>
<dbReference type="FunFam" id="3.40.20.10:FF:000012">
    <property type="entry name" value="Twinfilin-1 isoform 1"/>
    <property type="match status" value="1"/>
</dbReference>
<dbReference type="Gene3D" id="3.40.20.10">
    <property type="entry name" value="Severin"/>
    <property type="match status" value="2"/>
</dbReference>
<dbReference type="InterPro" id="IPR002108">
    <property type="entry name" value="ADF-H"/>
</dbReference>
<dbReference type="InterPro" id="IPR029006">
    <property type="entry name" value="ADF-H/Gelsolin-like_dom_sf"/>
</dbReference>
<dbReference type="InterPro" id="IPR028458">
    <property type="entry name" value="Twinfilin"/>
</dbReference>
<dbReference type="PANTHER" id="PTHR13759">
    <property type="entry name" value="TWINFILIN"/>
    <property type="match status" value="1"/>
</dbReference>
<dbReference type="PANTHER" id="PTHR13759:SF9">
    <property type="entry name" value="TWINFILIN-2"/>
    <property type="match status" value="1"/>
</dbReference>
<dbReference type="Pfam" id="PF00241">
    <property type="entry name" value="Cofilin_ADF"/>
    <property type="match status" value="2"/>
</dbReference>
<dbReference type="SMART" id="SM00102">
    <property type="entry name" value="ADF"/>
    <property type="match status" value="2"/>
</dbReference>
<dbReference type="SUPFAM" id="SSF55753">
    <property type="entry name" value="Actin depolymerizing proteins"/>
    <property type="match status" value="2"/>
</dbReference>
<dbReference type="PROSITE" id="PS51263">
    <property type="entry name" value="ADF_H"/>
    <property type="match status" value="2"/>
</dbReference>
<evidence type="ECO:0000250" key="1"/>
<evidence type="ECO:0000255" key="2">
    <source>
        <dbReference type="PROSITE-ProRule" id="PRU00599"/>
    </source>
</evidence>
<evidence type="ECO:0000256" key="3">
    <source>
        <dbReference type="SAM" id="MobiDB-lite"/>
    </source>
</evidence>
<evidence type="ECO:0000269" key="4">
    <source>
    </source>
</evidence>
<evidence type="ECO:0000269" key="5">
    <source>
    </source>
</evidence>
<evidence type="ECO:0000269" key="6">
    <source ref="6"/>
</evidence>
<evidence type="ECO:0000305" key="7"/>
<evidence type="ECO:0007744" key="8">
    <source>
    </source>
</evidence>
<evidence type="ECO:0007744" key="9">
    <source>
    </source>
</evidence>
<evidence type="ECO:0007744" key="10">
    <source>
    </source>
</evidence>
<evidence type="ECO:0007744" key="11">
    <source>
    </source>
</evidence>
<evidence type="ECO:0007744" key="12">
    <source>
    </source>
</evidence>
<evidence type="ECO:0007829" key="13">
    <source>
        <dbReference type="PDB" id="2VAC"/>
    </source>
</evidence>
<evidence type="ECO:0007829" key="14">
    <source>
        <dbReference type="PDB" id="2W0I"/>
    </source>
</evidence>
<protein>
    <recommendedName>
        <fullName>Twinfilin-2</fullName>
    </recommendedName>
    <alternativeName>
        <fullName>A6-related protein</fullName>
        <shortName>hA6RP</shortName>
    </alternativeName>
    <alternativeName>
        <fullName>Protein tyrosine kinase 9-like</fullName>
    </alternativeName>
    <alternativeName>
        <fullName>Twinfilin-1-like protein</fullName>
    </alternativeName>
</protein>
<accession>Q6IBS0</accession>
<accession>Q9Y3F5</accession>
<sequence>MAHQTGIHATEELKEFFAKARAGSVRLIKVVIEDEQLVLGASQEPVGRWDQDYDRAVLPLLDAQQPCYLLYRLDSQNAQGFEWLFLAWSPDNSPVRLKMLYAATRATVKKEFGGGHIKDELFGTVKDDLSFAGYQKHLSSCAAPAPLTSAERELQQIRINEVKTEISVESKHQTLQGLAFPLQPEAQRALQQLKQKMVNYIQMKLDLERETIELVHTEPTDVAQLPSRVPRDAARYHFFLYKHTHEGDPLESVVFIYSMPGYKCSIKERMLYSSCKSRLLDSVEQDFHLEIAKKIEIGDGAELTAEFLYDEVHPKQHAFKQAFAKPKGPGGKRGHKRLIRGPGENGDDS</sequence>
<organism>
    <name type="scientific">Homo sapiens</name>
    <name type="common">Human</name>
    <dbReference type="NCBI Taxonomy" id="9606"/>
    <lineage>
        <taxon>Eukaryota</taxon>
        <taxon>Metazoa</taxon>
        <taxon>Chordata</taxon>
        <taxon>Craniata</taxon>
        <taxon>Vertebrata</taxon>
        <taxon>Euteleostomi</taxon>
        <taxon>Mammalia</taxon>
        <taxon>Eutheria</taxon>
        <taxon>Euarchontoglires</taxon>
        <taxon>Primates</taxon>
        <taxon>Haplorrhini</taxon>
        <taxon>Catarrhini</taxon>
        <taxon>Hominidae</taxon>
        <taxon>Homo</taxon>
    </lineage>
</organism>